<protein>
    <recommendedName>
        <fullName evidence="1">Na(+)/H(+) antiporter NhaA</fullName>
    </recommendedName>
    <alternativeName>
        <fullName evidence="1">Sodium/proton antiporter NhaA</fullName>
    </alternativeName>
</protein>
<reference key="1">
    <citation type="journal article" date="2001" name="Nature">
        <title>Genome sequence of enterohaemorrhagic Escherichia coli O157:H7.</title>
        <authorList>
            <person name="Perna N.T."/>
            <person name="Plunkett G. III"/>
            <person name="Burland V."/>
            <person name="Mau B."/>
            <person name="Glasner J.D."/>
            <person name="Rose D.J."/>
            <person name="Mayhew G.F."/>
            <person name="Evans P.S."/>
            <person name="Gregor J."/>
            <person name="Kirkpatrick H.A."/>
            <person name="Posfai G."/>
            <person name="Hackett J."/>
            <person name="Klink S."/>
            <person name="Boutin A."/>
            <person name="Shao Y."/>
            <person name="Miller L."/>
            <person name="Grotbeck E.J."/>
            <person name="Davis N.W."/>
            <person name="Lim A."/>
            <person name="Dimalanta E.T."/>
            <person name="Potamousis K."/>
            <person name="Apodaca J."/>
            <person name="Anantharaman T.S."/>
            <person name="Lin J."/>
            <person name="Yen G."/>
            <person name="Schwartz D.C."/>
            <person name="Welch R.A."/>
            <person name="Blattner F.R."/>
        </authorList>
    </citation>
    <scope>NUCLEOTIDE SEQUENCE [LARGE SCALE GENOMIC DNA]</scope>
    <source>
        <strain>O157:H7 / EDL933 / ATCC 700927 / EHEC</strain>
    </source>
</reference>
<reference key="2">
    <citation type="journal article" date="2001" name="DNA Res.">
        <title>Complete genome sequence of enterohemorrhagic Escherichia coli O157:H7 and genomic comparison with a laboratory strain K-12.</title>
        <authorList>
            <person name="Hayashi T."/>
            <person name="Makino K."/>
            <person name="Ohnishi M."/>
            <person name="Kurokawa K."/>
            <person name="Ishii K."/>
            <person name="Yokoyama K."/>
            <person name="Han C.-G."/>
            <person name="Ohtsubo E."/>
            <person name="Nakayama K."/>
            <person name="Murata T."/>
            <person name="Tanaka M."/>
            <person name="Tobe T."/>
            <person name="Iida T."/>
            <person name="Takami H."/>
            <person name="Honda T."/>
            <person name="Sasakawa C."/>
            <person name="Ogasawara N."/>
            <person name="Yasunaga T."/>
            <person name="Kuhara S."/>
            <person name="Shiba T."/>
            <person name="Hattori M."/>
            <person name="Shinagawa H."/>
        </authorList>
    </citation>
    <scope>NUCLEOTIDE SEQUENCE [LARGE SCALE GENOMIC DNA]</scope>
    <source>
        <strain>O157:H7 / Sakai / RIMD 0509952 / EHEC</strain>
    </source>
</reference>
<feature type="chain" id="PRO_0000334286" description="Na(+)/H(+) antiporter NhaA">
    <location>
        <begin position="1"/>
        <end position="388"/>
    </location>
</feature>
<feature type="topological domain" description="Cytoplasmic" evidence="1">
    <location>
        <begin position="1"/>
        <end position="11"/>
    </location>
</feature>
<feature type="transmembrane region" description="Helical; Name=1" evidence="1">
    <location>
        <begin position="12"/>
        <end position="31"/>
    </location>
</feature>
<feature type="topological domain" description="Periplasmic" evidence="1">
    <location>
        <begin position="32"/>
        <end position="58"/>
    </location>
</feature>
<feature type="transmembrane region" description="Helical; Name=2" evidence="1">
    <location>
        <begin position="59"/>
        <end position="80"/>
    </location>
</feature>
<feature type="topological domain" description="Cytoplasmic" evidence="1">
    <location>
        <begin position="81"/>
        <end position="96"/>
    </location>
</feature>
<feature type="transmembrane region" description="Helical; Name=3" evidence="1">
    <location>
        <begin position="97"/>
        <end position="116"/>
    </location>
</feature>
<feature type="topological domain" description="Periplasmic" evidence="1">
    <location>
        <begin position="117"/>
        <end position="122"/>
    </location>
</feature>
<feature type="transmembrane region" description="Helical; Name=4" evidence="1">
    <location>
        <begin position="123"/>
        <end position="130"/>
    </location>
</feature>
<feature type="topological domain" description="Cytoplasmic" evidence="1">
    <location>
        <begin position="131"/>
        <end position="154"/>
    </location>
</feature>
<feature type="transmembrane region" description="Helical; Name=5" evidence="1">
    <location>
        <begin position="155"/>
        <end position="176"/>
    </location>
</feature>
<feature type="topological domain" description="Periplasmic" evidence="1">
    <location>
        <begin position="177"/>
        <end position="180"/>
    </location>
</feature>
<feature type="transmembrane region" description="Helical; Name=6" evidence="1">
    <location>
        <begin position="181"/>
        <end position="200"/>
    </location>
</feature>
<feature type="topological domain" description="Cytoplasmic" evidence="1">
    <location>
        <begin position="201"/>
        <end position="204"/>
    </location>
</feature>
<feature type="transmembrane region" description="Helical; Name=7" evidence="1">
    <location>
        <begin position="205"/>
        <end position="222"/>
    </location>
</feature>
<feature type="topological domain" description="Periplasmic" evidence="1">
    <location>
        <position position="223"/>
    </location>
</feature>
<feature type="transmembrane region" description="Helical; Name=8" evidence="1">
    <location>
        <begin position="224"/>
        <end position="236"/>
    </location>
</feature>
<feature type="topological domain" description="Cytoplasmic" evidence="1">
    <location>
        <begin position="237"/>
        <end position="253"/>
    </location>
</feature>
<feature type="transmembrane region" description="Helical; Name=9" evidence="1">
    <location>
        <begin position="254"/>
        <end position="272"/>
    </location>
</feature>
<feature type="topological domain" description="Periplasmic" evidence="1">
    <location>
        <begin position="273"/>
        <end position="286"/>
    </location>
</feature>
<feature type="transmembrane region" description="Helical; Name=10" evidence="1">
    <location>
        <begin position="287"/>
        <end position="310"/>
    </location>
</feature>
<feature type="topological domain" description="Cytoplasmic" evidence="1">
    <location>
        <begin position="311"/>
        <end position="339"/>
    </location>
</feature>
<feature type="transmembrane region" description="Helical; Name=11" evidence="1">
    <location>
        <begin position="340"/>
        <end position="350"/>
    </location>
</feature>
<feature type="topological domain" description="Periplasmic" evidence="1">
    <location>
        <begin position="351"/>
        <end position="357"/>
    </location>
</feature>
<feature type="transmembrane region" description="Helical; Name=12" evidence="1">
    <location>
        <begin position="358"/>
        <end position="380"/>
    </location>
</feature>
<feature type="topological domain" description="Cytoplasmic" evidence="1">
    <location>
        <begin position="381"/>
        <end position="388"/>
    </location>
</feature>
<keyword id="KW-0050">Antiport</keyword>
<keyword id="KW-0997">Cell inner membrane</keyword>
<keyword id="KW-1003">Cell membrane</keyword>
<keyword id="KW-0406">Ion transport</keyword>
<keyword id="KW-0472">Membrane</keyword>
<keyword id="KW-1185">Reference proteome</keyword>
<keyword id="KW-0915">Sodium</keyword>
<keyword id="KW-0739">Sodium transport</keyword>
<keyword id="KW-0812">Transmembrane</keyword>
<keyword id="KW-1133">Transmembrane helix</keyword>
<keyword id="KW-0813">Transport</keyword>
<gene>
    <name evidence="1" type="primary">nhaA</name>
    <name type="ordered locus">Z0018</name>
    <name type="ordered locus">ECs0017</name>
</gene>
<organism>
    <name type="scientific">Escherichia coli O157:H7</name>
    <dbReference type="NCBI Taxonomy" id="83334"/>
    <lineage>
        <taxon>Bacteria</taxon>
        <taxon>Pseudomonadati</taxon>
        <taxon>Pseudomonadota</taxon>
        <taxon>Gammaproteobacteria</taxon>
        <taxon>Enterobacterales</taxon>
        <taxon>Enterobacteriaceae</taxon>
        <taxon>Escherichia</taxon>
    </lineage>
</organism>
<evidence type="ECO:0000255" key="1">
    <source>
        <dbReference type="HAMAP-Rule" id="MF_01844"/>
    </source>
</evidence>
<dbReference type="EMBL" id="AE005174">
    <property type="protein sequence ID" value="AAG54317.1"/>
    <property type="molecule type" value="Genomic_DNA"/>
</dbReference>
<dbReference type="EMBL" id="BA000007">
    <property type="protein sequence ID" value="BAB33440.1"/>
    <property type="molecule type" value="Genomic_DNA"/>
</dbReference>
<dbReference type="PIR" id="A85482">
    <property type="entry name" value="A85482"/>
</dbReference>
<dbReference type="PIR" id="A99631">
    <property type="entry name" value="A99631"/>
</dbReference>
<dbReference type="RefSeq" id="NP_308044.1">
    <property type="nucleotide sequence ID" value="NC_002695.1"/>
</dbReference>
<dbReference type="RefSeq" id="WP_000681368.1">
    <property type="nucleotide sequence ID" value="NZ_VOAI01000002.1"/>
</dbReference>
<dbReference type="SMR" id="Q8XA63"/>
<dbReference type="STRING" id="155864.Z0018"/>
<dbReference type="GeneID" id="913409"/>
<dbReference type="GeneID" id="93777422"/>
<dbReference type="KEGG" id="ece:Z0018"/>
<dbReference type="KEGG" id="ecs:ECs_0017"/>
<dbReference type="PATRIC" id="fig|386585.9.peg.113"/>
<dbReference type="eggNOG" id="COG3004">
    <property type="taxonomic scope" value="Bacteria"/>
</dbReference>
<dbReference type="HOGENOM" id="CLU_015803_1_0_6"/>
<dbReference type="OMA" id="HGFGIPM"/>
<dbReference type="Proteomes" id="UP000000558">
    <property type="component" value="Chromosome"/>
</dbReference>
<dbReference type="Proteomes" id="UP000002519">
    <property type="component" value="Chromosome"/>
</dbReference>
<dbReference type="GO" id="GO:0005886">
    <property type="term" value="C:plasma membrane"/>
    <property type="evidence" value="ECO:0007669"/>
    <property type="project" value="UniProtKB-SubCell"/>
</dbReference>
<dbReference type="GO" id="GO:0015385">
    <property type="term" value="F:sodium:proton antiporter activity"/>
    <property type="evidence" value="ECO:0007669"/>
    <property type="project" value="TreeGrafter"/>
</dbReference>
<dbReference type="GO" id="GO:0006885">
    <property type="term" value="P:regulation of pH"/>
    <property type="evidence" value="ECO:0007669"/>
    <property type="project" value="InterPro"/>
</dbReference>
<dbReference type="FunFam" id="1.20.1530.10:FF:000001">
    <property type="entry name" value="Na(+)/H(+) antiporter NhaA"/>
    <property type="match status" value="1"/>
</dbReference>
<dbReference type="Gene3D" id="1.20.1530.10">
    <property type="entry name" value="Na+/H+ antiporter like domain"/>
    <property type="match status" value="1"/>
</dbReference>
<dbReference type="HAMAP" id="MF_01844">
    <property type="entry name" value="NhaA"/>
    <property type="match status" value="1"/>
</dbReference>
<dbReference type="InterPro" id="IPR023171">
    <property type="entry name" value="Na/H_antiporter_dom_sf"/>
</dbReference>
<dbReference type="InterPro" id="IPR004670">
    <property type="entry name" value="NhaA"/>
</dbReference>
<dbReference type="NCBIfam" id="TIGR00773">
    <property type="entry name" value="NhaA"/>
    <property type="match status" value="1"/>
</dbReference>
<dbReference type="NCBIfam" id="NF007111">
    <property type="entry name" value="PRK09560.1"/>
    <property type="match status" value="1"/>
</dbReference>
<dbReference type="NCBIfam" id="NF007112">
    <property type="entry name" value="PRK09561.1"/>
    <property type="match status" value="1"/>
</dbReference>
<dbReference type="PANTHER" id="PTHR30341:SF0">
    <property type="entry name" value="NA(+)_H(+) ANTIPORTER NHAA"/>
    <property type="match status" value="1"/>
</dbReference>
<dbReference type="PANTHER" id="PTHR30341">
    <property type="entry name" value="SODIUM ION/PROTON ANTIPORTER NHAA-RELATED"/>
    <property type="match status" value="1"/>
</dbReference>
<dbReference type="Pfam" id="PF06965">
    <property type="entry name" value="Na_H_antiport_1"/>
    <property type="match status" value="1"/>
</dbReference>
<comment type="function">
    <text evidence="1">Na(+)/H(+) antiporter that extrudes sodium in exchange for external protons.</text>
</comment>
<comment type="catalytic activity">
    <reaction evidence="1">
        <text>Na(+)(in) + 2 H(+)(out) = Na(+)(out) + 2 H(+)(in)</text>
        <dbReference type="Rhea" id="RHEA:29251"/>
        <dbReference type="ChEBI" id="CHEBI:15378"/>
        <dbReference type="ChEBI" id="CHEBI:29101"/>
    </reaction>
    <physiologicalReaction direction="left-to-right" evidence="1">
        <dbReference type="Rhea" id="RHEA:29252"/>
    </physiologicalReaction>
</comment>
<comment type="subcellular location">
    <subcellularLocation>
        <location evidence="1">Cell inner membrane</location>
        <topology evidence="1">Multi-pass membrane protein</topology>
    </subcellularLocation>
</comment>
<comment type="similarity">
    <text evidence="1">Belongs to the NhaA Na(+)/H(+) (TC 2.A.33) antiporter family.</text>
</comment>
<proteinExistence type="inferred from homology"/>
<name>NHAA_ECO57</name>
<accession>Q8XA63</accession>
<accession>Q7AHU2</accession>
<sequence length="388" mass="41374">MKHLHRFFSSDASGGIILIIAAILAMMMANSGATSGWYHDFLETPVQLRVGSLEINKNMLLWINDALMAVFFLLVGLEVKRELMQGSLASLRQAAFPVIAAIGGMIVPALLYLAFNYADPITREGWAIPAATDIAFALGVLALLGSRVPLALKIFLMALAIIDDLGAIIIIALFYTNDLSMASLGVAAVAIAVLAVLNLCGVRRTGVYILVGVVLWTAVLKSGVHATLAGVIVGFFIPLKEKHGRSPAKRLEHVLHPWVAYLILPLFAFANAGVSLQGVTLDGLTSILPLGIIAGLLIGKPLGISLFCWLALRLKLAHLPEGTTYQQIMAVGILCGIGFTMSIFIASLAFGSVDPELINWAKLGILVGSISSAVIGYSWLRVRLRPSV</sequence>